<proteinExistence type="inferred from homology"/>
<comment type="function">
    <text evidence="1">Increases the formation of ribosomal termination complexes and stimulates activities of RF-1 and RF-2. It binds guanine nucleotides and has strong preference for UGA stop codons. It may interact directly with the ribosome. The stimulation of RF-1 and RF-2 is significantly reduced by GTP and GDP, but not by GMP.</text>
</comment>
<comment type="subcellular location">
    <subcellularLocation>
        <location evidence="1">Cytoplasm</location>
    </subcellularLocation>
</comment>
<comment type="similarity">
    <text evidence="1">Belongs to the TRAFAC class translation factor GTPase superfamily. Classic translation factor GTPase family. PrfC subfamily.</text>
</comment>
<accession>A5IRJ6</accession>
<protein>
    <recommendedName>
        <fullName evidence="1">Peptide chain release factor 3</fullName>
        <shortName evidence="1">RF-3</shortName>
    </recommendedName>
</protein>
<name>RF3_STAA9</name>
<sequence length="520" mass="59574">MNLKQEVESRKTFAIISHPDAGKTTLTEKLLYFSGAIREAGTVKGKKTGKFATSDWMKVEQERGISVTSSVMQFDYDDYKINILDTPGHEDFSEDTYRTLMAVDSAVMVIDCAKGIEPQTLKLFKVCKMRGIPIFTFINKLDRVGKEPFELLDEIEETLNIETYPMNWPIGMGQSFFGIIDRKSKTIEPFRDEENILHLNDDFELEEDHAITNDSAFEQAIEELMLVEEAGEAFDNDALLSGDLTPVFFGSALANFGVQNFLNAYVDFAPMPNARQTKEDVEVSPFDDSFSGFIFKIQANMDPKHRDRIAFMRVVSGAFERGMDVTLQRTNKKQKITRSTSFMADDKETVNHAVAGDIIGLYDTGNYQIGDTLVGGKQTYSFQDLPQFTPEIFMKVSAKNVMKQKHFHKGIEQLVQEGAIQYYKTLHTNQIILGAVGQLQFEVFEHRMKNEYNVDVVMEPVGRKIARWIENEDQITDKMNTSRSILVKDRYDDLVFLFENEFATRWFEEKFLEIKLYSLL</sequence>
<reference key="1">
    <citation type="submission" date="2007-05" db="EMBL/GenBank/DDBJ databases">
        <title>Complete sequence of chromosome of Staphylococcus aureus subsp. aureus JH9.</title>
        <authorList>
            <consortium name="US DOE Joint Genome Institute"/>
            <person name="Copeland A."/>
            <person name="Lucas S."/>
            <person name="Lapidus A."/>
            <person name="Barry K."/>
            <person name="Detter J.C."/>
            <person name="Glavina del Rio T."/>
            <person name="Hammon N."/>
            <person name="Israni S."/>
            <person name="Pitluck S."/>
            <person name="Chain P."/>
            <person name="Malfatti S."/>
            <person name="Shin M."/>
            <person name="Vergez L."/>
            <person name="Schmutz J."/>
            <person name="Larimer F."/>
            <person name="Land M."/>
            <person name="Hauser L."/>
            <person name="Kyrpides N."/>
            <person name="Kim E."/>
            <person name="Tomasz A."/>
            <person name="Richardson P."/>
        </authorList>
    </citation>
    <scope>NUCLEOTIDE SEQUENCE [LARGE SCALE GENOMIC DNA]</scope>
    <source>
        <strain>JH9</strain>
    </source>
</reference>
<feature type="chain" id="PRO_1000075172" description="Peptide chain release factor 3">
    <location>
        <begin position="1"/>
        <end position="520"/>
    </location>
</feature>
<feature type="domain" description="tr-type G">
    <location>
        <begin position="8"/>
        <end position="277"/>
    </location>
</feature>
<feature type="binding site" evidence="1">
    <location>
        <begin position="17"/>
        <end position="24"/>
    </location>
    <ligand>
        <name>GTP</name>
        <dbReference type="ChEBI" id="CHEBI:37565"/>
    </ligand>
</feature>
<feature type="binding site" evidence="1">
    <location>
        <begin position="85"/>
        <end position="89"/>
    </location>
    <ligand>
        <name>GTP</name>
        <dbReference type="ChEBI" id="CHEBI:37565"/>
    </ligand>
</feature>
<feature type="binding site" evidence="1">
    <location>
        <begin position="139"/>
        <end position="142"/>
    </location>
    <ligand>
        <name>GTP</name>
        <dbReference type="ChEBI" id="CHEBI:37565"/>
    </ligand>
</feature>
<organism>
    <name type="scientific">Staphylococcus aureus (strain JH9)</name>
    <dbReference type="NCBI Taxonomy" id="359786"/>
    <lineage>
        <taxon>Bacteria</taxon>
        <taxon>Bacillati</taxon>
        <taxon>Bacillota</taxon>
        <taxon>Bacilli</taxon>
        <taxon>Bacillales</taxon>
        <taxon>Staphylococcaceae</taxon>
        <taxon>Staphylococcus</taxon>
    </lineage>
</organism>
<gene>
    <name evidence="1" type="primary">prfC</name>
    <name type="ordered locus">SaurJH9_1018</name>
</gene>
<dbReference type="EMBL" id="CP000703">
    <property type="protein sequence ID" value="ABQ48819.1"/>
    <property type="molecule type" value="Genomic_DNA"/>
</dbReference>
<dbReference type="RefSeq" id="WP_001049950.1">
    <property type="nucleotide sequence ID" value="NC_009487.1"/>
</dbReference>
<dbReference type="SMR" id="A5IRJ6"/>
<dbReference type="KEGG" id="saj:SaurJH9_1018"/>
<dbReference type="HOGENOM" id="CLU_002794_2_1_9"/>
<dbReference type="GO" id="GO:0005829">
    <property type="term" value="C:cytosol"/>
    <property type="evidence" value="ECO:0007669"/>
    <property type="project" value="TreeGrafter"/>
</dbReference>
<dbReference type="GO" id="GO:0005525">
    <property type="term" value="F:GTP binding"/>
    <property type="evidence" value="ECO:0007669"/>
    <property type="project" value="UniProtKB-UniRule"/>
</dbReference>
<dbReference type="GO" id="GO:0003924">
    <property type="term" value="F:GTPase activity"/>
    <property type="evidence" value="ECO:0007669"/>
    <property type="project" value="InterPro"/>
</dbReference>
<dbReference type="GO" id="GO:0016150">
    <property type="term" value="F:translation release factor activity, codon nonspecific"/>
    <property type="evidence" value="ECO:0007669"/>
    <property type="project" value="TreeGrafter"/>
</dbReference>
<dbReference type="GO" id="GO:0016149">
    <property type="term" value="F:translation release factor activity, codon specific"/>
    <property type="evidence" value="ECO:0007669"/>
    <property type="project" value="UniProtKB-UniRule"/>
</dbReference>
<dbReference type="GO" id="GO:0006449">
    <property type="term" value="P:regulation of translational termination"/>
    <property type="evidence" value="ECO:0007669"/>
    <property type="project" value="UniProtKB-UniRule"/>
</dbReference>
<dbReference type="CDD" id="cd04169">
    <property type="entry name" value="RF3"/>
    <property type="match status" value="1"/>
</dbReference>
<dbReference type="CDD" id="cd16259">
    <property type="entry name" value="RF3_III"/>
    <property type="match status" value="1"/>
</dbReference>
<dbReference type="FunFam" id="2.40.30.10:FF:000040">
    <property type="entry name" value="Peptide chain release factor 3"/>
    <property type="match status" value="1"/>
</dbReference>
<dbReference type="FunFam" id="3.30.70.3280:FF:000001">
    <property type="entry name" value="Peptide chain release factor 3"/>
    <property type="match status" value="1"/>
</dbReference>
<dbReference type="FunFam" id="3.40.50.300:FF:000542">
    <property type="entry name" value="Peptide chain release factor 3"/>
    <property type="match status" value="1"/>
</dbReference>
<dbReference type="Gene3D" id="3.40.50.300">
    <property type="entry name" value="P-loop containing nucleotide triphosphate hydrolases"/>
    <property type="match status" value="1"/>
</dbReference>
<dbReference type="Gene3D" id="3.30.70.3280">
    <property type="entry name" value="Peptide chain release factor 3, domain III"/>
    <property type="match status" value="1"/>
</dbReference>
<dbReference type="Gene3D" id="2.40.30.10">
    <property type="entry name" value="Translation factors"/>
    <property type="match status" value="1"/>
</dbReference>
<dbReference type="HAMAP" id="MF_00072">
    <property type="entry name" value="Rel_fac_3"/>
    <property type="match status" value="1"/>
</dbReference>
<dbReference type="InterPro" id="IPR053905">
    <property type="entry name" value="EF-G-like_DII"/>
</dbReference>
<dbReference type="InterPro" id="IPR035647">
    <property type="entry name" value="EFG_III/V"/>
</dbReference>
<dbReference type="InterPro" id="IPR031157">
    <property type="entry name" value="G_TR_CS"/>
</dbReference>
<dbReference type="InterPro" id="IPR027417">
    <property type="entry name" value="P-loop_NTPase"/>
</dbReference>
<dbReference type="InterPro" id="IPR004548">
    <property type="entry name" value="PrfC"/>
</dbReference>
<dbReference type="InterPro" id="IPR032090">
    <property type="entry name" value="RF3_C"/>
</dbReference>
<dbReference type="InterPro" id="IPR038467">
    <property type="entry name" value="RF3_dom_3_sf"/>
</dbReference>
<dbReference type="InterPro" id="IPR041732">
    <property type="entry name" value="RF3_GTP-bd"/>
</dbReference>
<dbReference type="InterPro" id="IPR005225">
    <property type="entry name" value="Small_GTP-bd"/>
</dbReference>
<dbReference type="InterPro" id="IPR000795">
    <property type="entry name" value="T_Tr_GTP-bd_dom"/>
</dbReference>
<dbReference type="InterPro" id="IPR009000">
    <property type="entry name" value="Transl_B-barrel_sf"/>
</dbReference>
<dbReference type="NCBIfam" id="TIGR00503">
    <property type="entry name" value="prfC"/>
    <property type="match status" value="1"/>
</dbReference>
<dbReference type="NCBIfam" id="NF001964">
    <property type="entry name" value="PRK00741.1"/>
    <property type="match status" value="1"/>
</dbReference>
<dbReference type="NCBIfam" id="TIGR00231">
    <property type="entry name" value="small_GTP"/>
    <property type="match status" value="1"/>
</dbReference>
<dbReference type="PANTHER" id="PTHR43556">
    <property type="entry name" value="PEPTIDE CHAIN RELEASE FACTOR RF3"/>
    <property type="match status" value="1"/>
</dbReference>
<dbReference type="PANTHER" id="PTHR43556:SF2">
    <property type="entry name" value="PEPTIDE CHAIN RELEASE FACTOR RF3"/>
    <property type="match status" value="1"/>
</dbReference>
<dbReference type="Pfam" id="PF22042">
    <property type="entry name" value="EF-G_D2"/>
    <property type="match status" value="1"/>
</dbReference>
<dbReference type="Pfam" id="PF00009">
    <property type="entry name" value="GTP_EFTU"/>
    <property type="match status" value="1"/>
</dbReference>
<dbReference type="Pfam" id="PF16658">
    <property type="entry name" value="RF3_C"/>
    <property type="match status" value="1"/>
</dbReference>
<dbReference type="PRINTS" id="PR00315">
    <property type="entry name" value="ELONGATNFCT"/>
</dbReference>
<dbReference type="SUPFAM" id="SSF54980">
    <property type="entry name" value="EF-G C-terminal domain-like"/>
    <property type="match status" value="1"/>
</dbReference>
<dbReference type="SUPFAM" id="SSF52540">
    <property type="entry name" value="P-loop containing nucleoside triphosphate hydrolases"/>
    <property type="match status" value="1"/>
</dbReference>
<dbReference type="SUPFAM" id="SSF50447">
    <property type="entry name" value="Translation proteins"/>
    <property type="match status" value="1"/>
</dbReference>
<dbReference type="PROSITE" id="PS00301">
    <property type="entry name" value="G_TR_1"/>
    <property type="match status" value="1"/>
</dbReference>
<dbReference type="PROSITE" id="PS51722">
    <property type="entry name" value="G_TR_2"/>
    <property type="match status" value="1"/>
</dbReference>
<evidence type="ECO:0000255" key="1">
    <source>
        <dbReference type="HAMAP-Rule" id="MF_00072"/>
    </source>
</evidence>
<keyword id="KW-0963">Cytoplasm</keyword>
<keyword id="KW-0342">GTP-binding</keyword>
<keyword id="KW-0547">Nucleotide-binding</keyword>
<keyword id="KW-0648">Protein biosynthesis</keyword>